<accession>P50729</accession>
<proteinExistence type="evidence at protein level"/>
<feature type="chain" id="PRO_0000205035" description="Probable ATP-dependent DNA helicase RecS">
    <location>
        <begin position="1"/>
        <end position="496"/>
    </location>
</feature>
<feature type="domain" description="Helicase ATP-binding" evidence="1">
    <location>
        <begin position="25"/>
        <end position="192"/>
    </location>
</feature>
<feature type="domain" description="Helicase C-terminal" evidence="2">
    <location>
        <begin position="219"/>
        <end position="363"/>
    </location>
</feature>
<feature type="short sequence motif" description="DEAH box">
    <location>
        <begin position="136"/>
        <end position="139"/>
    </location>
</feature>
<feature type="binding site" evidence="1">
    <location>
        <begin position="38"/>
        <end position="45"/>
    </location>
    <ligand>
        <name>ATP</name>
        <dbReference type="ChEBI" id="CHEBI:30616"/>
    </ligand>
</feature>
<reference key="1">
    <citation type="journal article" date="1996" name="Microbiology">
        <title>Sequence analysis of the Bacillus subtilis chromosome region between the serA and kdg loci cloned in a yeast artificial chromosome.</title>
        <authorList>
            <person name="Sorokin A.V."/>
            <person name="Azevedo V."/>
            <person name="Zumstein E."/>
            <person name="Galleron N."/>
            <person name="Ehrlich S.D."/>
            <person name="Serror P."/>
        </authorList>
    </citation>
    <scope>NUCLEOTIDE SEQUENCE [GENOMIC DNA]</scope>
    <source>
        <strain>168 / Marburg / ATCC 6051 / DSM 10 / JCM 1465 / NBRC 13719 / NCIMB 3610 / NRRL NRS-744 / VKM B-501</strain>
    </source>
</reference>
<reference key="2">
    <citation type="journal article" date="1997" name="Nature">
        <title>The complete genome sequence of the Gram-positive bacterium Bacillus subtilis.</title>
        <authorList>
            <person name="Kunst F."/>
            <person name="Ogasawara N."/>
            <person name="Moszer I."/>
            <person name="Albertini A.M."/>
            <person name="Alloni G."/>
            <person name="Azevedo V."/>
            <person name="Bertero M.G."/>
            <person name="Bessieres P."/>
            <person name="Bolotin A."/>
            <person name="Borchert S."/>
            <person name="Borriss R."/>
            <person name="Boursier L."/>
            <person name="Brans A."/>
            <person name="Braun M."/>
            <person name="Brignell S.C."/>
            <person name="Bron S."/>
            <person name="Brouillet S."/>
            <person name="Bruschi C.V."/>
            <person name="Caldwell B."/>
            <person name="Capuano V."/>
            <person name="Carter N.M."/>
            <person name="Choi S.-K."/>
            <person name="Codani J.-J."/>
            <person name="Connerton I.F."/>
            <person name="Cummings N.J."/>
            <person name="Daniel R.A."/>
            <person name="Denizot F."/>
            <person name="Devine K.M."/>
            <person name="Duesterhoeft A."/>
            <person name="Ehrlich S.D."/>
            <person name="Emmerson P.T."/>
            <person name="Entian K.-D."/>
            <person name="Errington J."/>
            <person name="Fabret C."/>
            <person name="Ferrari E."/>
            <person name="Foulger D."/>
            <person name="Fritz C."/>
            <person name="Fujita M."/>
            <person name="Fujita Y."/>
            <person name="Fuma S."/>
            <person name="Galizzi A."/>
            <person name="Galleron N."/>
            <person name="Ghim S.-Y."/>
            <person name="Glaser P."/>
            <person name="Goffeau A."/>
            <person name="Golightly E.J."/>
            <person name="Grandi G."/>
            <person name="Guiseppi G."/>
            <person name="Guy B.J."/>
            <person name="Haga K."/>
            <person name="Haiech J."/>
            <person name="Harwood C.R."/>
            <person name="Henaut A."/>
            <person name="Hilbert H."/>
            <person name="Holsappel S."/>
            <person name="Hosono S."/>
            <person name="Hullo M.-F."/>
            <person name="Itaya M."/>
            <person name="Jones L.-M."/>
            <person name="Joris B."/>
            <person name="Karamata D."/>
            <person name="Kasahara Y."/>
            <person name="Klaerr-Blanchard M."/>
            <person name="Klein C."/>
            <person name="Kobayashi Y."/>
            <person name="Koetter P."/>
            <person name="Koningstein G."/>
            <person name="Krogh S."/>
            <person name="Kumano M."/>
            <person name="Kurita K."/>
            <person name="Lapidus A."/>
            <person name="Lardinois S."/>
            <person name="Lauber J."/>
            <person name="Lazarevic V."/>
            <person name="Lee S.-M."/>
            <person name="Levine A."/>
            <person name="Liu H."/>
            <person name="Masuda S."/>
            <person name="Mauel C."/>
            <person name="Medigue C."/>
            <person name="Medina N."/>
            <person name="Mellado R.P."/>
            <person name="Mizuno M."/>
            <person name="Moestl D."/>
            <person name="Nakai S."/>
            <person name="Noback M."/>
            <person name="Noone D."/>
            <person name="O'Reilly M."/>
            <person name="Ogawa K."/>
            <person name="Ogiwara A."/>
            <person name="Oudega B."/>
            <person name="Park S.-H."/>
            <person name="Parro V."/>
            <person name="Pohl T.M."/>
            <person name="Portetelle D."/>
            <person name="Porwollik S."/>
            <person name="Prescott A.M."/>
            <person name="Presecan E."/>
            <person name="Pujic P."/>
            <person name="Purnelle B."/>
            <person name="Rapoport G."/>
            <person name="Rey M."/>
            <person name="Reynolds S."/>
            <person name="Rieger M."/>
            <person name="Rivolta C."/>
            <person name="Rocha E."/>
            <person name="Roche B."/>
            <person name="Rose M."/>
            <person name="Sadaie Y."/>
            <person name="Sato T."/>
            <person name="Scanlan E."/>
            <person name="Schleich S."/>
            <person name="Schroeter R."/>
            <person name="Scoffone F."/>
            <person name="Sekiguchi J."/>
            <person name="Sekowska A."/>
            <person name="Seror S.J."/>
            <person name="Serror P."/>
            <person name="Shin B.-S."/>
            <person name="Soldo B."/>
            <person name="Sorokin A."/>
            <person name="Tacconi E."/>
            <person name="Takagi T."/>
            <person name="Takahashi H."/>
            <person name="Takemaru K."/>
            <person name="Takeuchi M."/>
            <person name="Tamakoshi A."/>
            <person name="Tanaka T."/>
            <person name="Terpstra P."/>
            <person name="Tognoni A."/>
            <person name="Tosato V."/>
            <person name="Uchiyama S."/>
            <person name="Vandenbol M."/>
            <person name="Vannier F."/>
            <person name="Vassarotti A."/>
            <person name="Viari A."/>
            <person name="Wambutt R."/>
            <person name="Wedler E."/>
            <person name="Wedler H."/>
            <person name="Weitzenegger T."/>
            <person name="Winters P."/>
            <person name="Wipat A."/>
            <person name="Yamamoto H."/>
            <person name="Yamane K."/>
            <person name="Yasumoto K."/>
            <person name="Yata K."/>
            <person name="Yoshida K."/>
            <person name="Yoshikawa H.-F."/>
            <person name="Zumstein E."/>
            <person name="Yoshikawa H."/>
            <person name="Danchin A."/>
        </authorList>
    </citation>
    <scope>NUCLEOTIDE SEQUENCE [LARGE SCALE GENOMIC DNA]</scope>
    <source>
        <strain>168</strain>
    </source>
</reference>
<reference key="3">
    <citation type="journal article" date="1998" name="J. Bacteriol.">
        <title>Genetic recombination in Bacillus subtilis 168: effects of recU and recS mutations on DNA repair and homologous recombination.</title>
        <authorList>
            <person name="Fernandez S."/>
            <person name="Sorokin A."/>
            <person name="Alonso J.C."/>
        </authorList>
    </citation>
    <scope>FUNCTION</scope>
    <scope>DISRUPTION PHENOTYPE</scope>
    <source>
        <strain>168 / YB886 / BG214</strain>
    </source>
</reference>
<reference key="4">
    <citation type="journal article" date="2006" name="J. Bacteriol.">
        <title>Recruitment of Bacillus subtilis RecN to DNA double-strand breaks in the absence of DNA end processing.</title>
        <authorList>
            <person name="Sanchez H."/>
            <person name="Kidane D."/>
            <person name="Castillo Cozar M."/>
            <person name="Graumann P.L."/>
            <person name="Alonso J.C."/>
        </authorList>
    </citation>
    <scope>FUNCTION</scope>
    <scope>DISRUPTION PHENOTYPE</scope>
    <source>
        <strain>168 / YB886 / BG214</strain>
    </source>
</reference>
<reference key="5">
    <citation type="journal article" date="2010" name="PLoS Genet.">
        <title>The C-terminal domain of the bacterial SSB protein acts as a DNA maintenance hub at active chromosome replication forks.</title>
        <authorList>
            <person name="Costes A."/>
            <person name="Lecointe F."/>
            <person name="McGovern S."/>
            <person name="Quevillon-Cheruel S."/>
            <person name="Polard P."/>
        </authorList>
    </citation>
    <scope>INTERACTION WITH SSBA AND YPBB</scope>
    <scope>SUBCELLULAR LOCATION</scope>
    <source>
        <strain>168</strain>
    </source>
</reference>
<evidence type="ECO:0000255" key="1">
    <source>
        <dbReference type="PROSITE-ProRule" id="PRU00541"/>
    </source>
</evidence>
<evidence type="ECO:0000255" key="2">
    <source>
        <dbReference type="PROSITE-ProRule" id="PRU00542"/>
    </source>
</evidence>
<evidence type="ECO:0000269" key="3">
    <source>
    </source>
</evidence>
<evidence type="ECO:0000269" key="4">
    <source>
    </source>
</evidence>
<evidence type="ECO:0000269" key="5">
    <source>
    </source>
</evidence>
<evidence type="ECO:0000303" key="6">
    <source>
    </source>
</evidence>
<evidence type="ECO:0000303" key="7">
    <source>
    </source>
</evidence>
<evidence type="ECO:0000305" key="8"/>
<evidence type="ECO:0000305" key="9">
    <source>
    </source>
</evidence>
<evidence type="ECO:0000305" key="10">
    <source>
    </source>
</evidence>
<name>RECS_BACSU</name>
<comment type="function">
    <text evidence="5 9">Probable 3'-5' DNA helicase (PubMed:16385024). Required in synaptic and/or post-synaptic stages of recombination (PubMed:9642195). Probably has an overlapping function with RecQ (PubMed:16385024). It probably acts to help generate ss-DNA from ds-DNA breaks (PubMed:16385024).</text>
</comment>
<comment type="catalytic activity">
    <reaction evidence="8">
        <text>Couples ATP hydrolysis with the unwinding of duplex DNA by translocating in the 3'-5' direction.</text>
        <dbReference type="EC" id="5.6.2.4"/>
    </reaction>
</comment>
<comment type="catalytic activity">
    <reaction>
        <text>ATP + H2O = ADP + phosphate + H(+)</text>
        <dbReference type="Rhea" id="RHEA:13065"/>
        <dbReference type="ChEBI" id="CHEBI:15377"/>
        <dbReference type="ChEBI" id="CHEBI:15378"/>
        <dbReference type="ChEBI" id="CHEBI:30616"/>
        <dbReference type="ChEBI" id="CHEBI:43474"/>
        <dbReference type="ChEBI" id="CHEBI:456216"/>
    </reaction>
</comment>
<comment type="subunit">
    <text evidence="4">Interacts with SSB (ssbA) and YpbB (PubMed:21170359).</text>
</comment>
<comment type="subcellular location">
    <subcellularLocation>
        <location evidence="10">Cytoplasm</location>
        <location evidence="10">Nucleoid</location>
    </subcellularLocation>
    <text evidence="10">Probably targeted to the nucleoid via its association with YpbB, which itself is targeted by SSB (ssbA) (Probable) (PubMed:21170359).</text>
</comment>
<comment type="disruption phenotype">
    <text evidence="3 5">Cells lacking this gene have an increased sensitivity to DNA damaging agents, 100-fold decreased plasmid transformation and 4-fold reduced chromosomal DNA transformation (PubMed:9642195). Sensitivity increases in the presence of mutated AddAB nuclease (PubMed:16385024).</text>
</comment>
<comment type="miscellaneous">
    <text evidence="10">The stop codon of ypbB overlaps with the start codon of recS, suggesting they are translationally coupled (Probable) (PubMed:21170359).</text>
</comment>
<comment type="similarity">
    <text evidence="8">Belongs to the helicase family. RecQ subfamily.</text>
</comment>
<dbReference type="EC" id="5.6.2.4" evidence="8"/>
<dbReference type="EMBL" id="L47648">
    <property type="protein sequence ID" value="AAC83947.1"/>
    <property type="molecule type" value="Genomic_DNA"/>
</dbReference>
<dbReference type="EMBL" id="AL009126">
    <property type="protein sequence ID" value="CAB14218.1"/>
    <property type="molecule type" value="Genomic_DNA"/>
</dbReference>
<dbReference type="PIR" id="A69691">
    <property type="entry name" value="A69691"/>
</dbReference>
<dbReference type="RefSeq" id="NP_390183.1">
    <property type="nucleotide sequence ID" value="NC_000964.3"/>
</dbReference>
<dbReference type="RefSeq" id="WP_003230528.1">
    <property type="nucleotide sequence ID" value="NZ_OZ025638.1"/>
</dbReference>
<dbReference type="SMR" id="P50729"/>
<dbReference type="FunCoup" id="P50729">
    <property type="interactions" value="15"/>
</dbReference>
<dbReference type="STRING" id="224308.BSU23020"/>
<dbReference type="PaxDb" id="224308-BSU23020"/>
<dbReference type="EnsemblBacteria" id="CAB14218">
    <property type="protein sequence ID" value="CAB14218"/>
    <property type="gene ID" value="BSU_23020"/>
</dbReference>
<dbReference type="GeneID" id="938969"/>
<dbReference type="KEGG" id="bsu:BSU23020"/>
<dbReference type="PATRIC" id="fig|224308.179.peg.2509"/>
<dbReference type="eggNOG" id="COG0514">
    <property type="taxonomic scope" value="Bacteria"/>
</dbReference>
<dbReference type="InParanoid" id="P50729"/>
<dbReference type="OrthoDB" id="9763310at2"/>
<dbReference type="PhylomeDB" id="P50729"/>
<dbReference type="BioCyc" id="BSUB:BSU23020-MONOMER"/>
<dbReference type="Proteomes" id="UP000001570">
    <property type="component" value="Chromosome"/>
</dbReference>
<dbReference type="GO" id="GO:0043590">
    <property type="term" value="C:bacterial nucleoid"/>
    <property type="evidence" value="ECO:0000318"/>
    <property type="project" value="GO_Central"/>
</dbReference>
<dbReference type="GO" id="GO:0005694">
    <property type="term" value="C:chromosome"/>
    <property type="evidence" value="ECO:0000318"/>
    <property type="project" value="GO_Central"/>
</dbReference>
<dbReference type="GO" id="GO:0005737">
    <property type="term" value="C:cytoplasm"/>
    <property type="evidence" value="ECO:0000318"/>
    <property type="project" value="GO_Central"/>
</dbReference>
<dbReference type="GO" id="GO:0030894">
    <property type="term" value="C:replisome"/>
    <property type="evidence" value="ECO:0000318"/>
    <property type="project" value="GO_Central"/>
</dbReference>
<dbReference type="GO" id="GO:0043138">
    <property type="term" value="F:3'-5' DNA helicase activity"/>
    <property type="evidence" value="ECO:0000318"/>
    <property type="project" value="GO_Central"/>
</dbReference>
<dbReference type="GO" id="GO:0005524">
    <property type="term" value="F:ATP binding"/>
    <property type="evidence" value="ECO:0007669"/>
    <property type="project" value="UniProtKB-KW"/>
</dbReference>
<dbReference type="GO" id="GO:0016887">
    <property type="term" value="F:ATP hydrolysis activity"/>
    <property type="evidence" value="ECO:0007669"/>
    <property type="project" value="RHEA"/>
</dbReference>
<dbReference type="GO" id="GO:0003677">
    <property type="term" value="F:DNA binding"/>
    <property type="evidence" value="ECO:0007669"/>
    <property type="project" value="UniProtKB-KW"/>
</dbReference>
<dbReference type="GO" id="GO:0009378">
    <property type="term" value="F:four-way junction helicase activity"/>
    <property type="evidence" value="ECO:0000318"/>
    <property type="project" value="GO_Central"/>
</dbReference>
<dbReference type="GO" id="GO:0006310">
    <property type="term" value="P:DNA recombination"/>
    <property type="evidence" value="ECO:0000318"/>
    <property type="project" value="GO_Central"/>
</dbReference>
<dbReference type="GO" id="GO:0006281">
    <property type="term" value="P:DNA repair"/>
    <property type="evidence" value="ECO:0000318"/>
    <property type="project" value="GO_Central"/>
</dbReference>
<dbReference type="CDD" id="cd17920">
    <property type="entry name" value="DEXHc_RecQ"/>
    <property type="match status" value="1"/>
</dbReference>
<dbReference type="CDD" id="cd18794">
    <property type="entry name" value="SF2_C_RecQ"/>
    <property type="match status" value="1"/>
</dbReference>
<dbReference type="FunFam" id="3.40.50.300:FF:001363">
    <property type="entry name" value="ATP-dependent DNA helicase RecQ"/>
    <property type="match status" value="1"/>
</dbReference>
<dbReference type="Gene3D" id="3.40.50.300">
    <property type="entry name" value="P-loop containing nucleotide triphosphate hydrolases"/>
    <property type="match status" value="2"/>
</dbReference>
<dbReference type="InterPro" id="IPR011545">
    <property type="entry name" value="DEAD/DEAH_box_helicase_dom"/>
</dbReference>
<dbReference type="InterPro" id="IPR002464">
    <property type="entry name" value="DNA/RNA_helicase_DEAH_CS"/>
</dbReference>
<dbReference type="InterPro" id="IPR004589">
    <property type="entry name" value="DNA_helicase_ATP-dep_RecQ"/>
</dbReference>
<dbReference type="InterPro" id="IPR014001">
    <property type="entry name" value="Helicase_ATP-bd"/>
</dbReference>
<dbReference type="InterPro" id="IPR001650">
    <property type="entry name" value="Helicase_C-like"/>
</dbReference>
<dbReference type="InterPro" id="IPR027417">
    <property type="entry name" value="P-loop_NTPase"/>
</dbReference>
<dbReference type="InterPro" id="IPR032284">
    <property type="entry name" value="RecQ_Zn-bd"/>
</dbReference>
<dbReference type="NCBIfam" id="TIGR00614">
    <property type="entry name" value="recQ_fam"/>
    <property type="match status" value="1"/>
</dbReference>
<dbReference type="PANTHER" id="PTHR13710:SF84">
    <property type="entry name" value="ATP-DEPENDENT DNA HELICASE RECS-RELATED"/>
    <property type="match status" value="1"/>
</dbReference>
<dbReference type="PANTHER" id="PTHR13710">
    <property type="entry name" value="DNA HELICASE RECQ FAMILY MEMBER"/>
    <property type="match status" value="1"/>
</dbReference>
<dbReference type="Pfam" id="PF00270">
    <property type="entry name" value="DEAD"/>
    <property type="match status" value="1"/>
</dbReference>
<dbReference type="Pfam" id="PF00271">
    <property type="entry name" value="Helicase_C"/>
    <property type="match status" value="1"/>
</dbReference>
<dbReference type="Pfam" id="PF16124">
    <property type="entry name" value="RecQ_Zn_bind"/>
    <property type="match status" value="1"/>
</dbReference>
<dbReference type="SMART" id="SM00487">
    <property type="entry name" value="DEXDc"/>
    <property type="match status" value="1"/>
</dbReference>
<dbReference type="SMART" id="SM00490">
    <property type="entry name" value="HELICc"/>
    <property type="match status" value="1"/>
</dbReference>
<dbReference type="SUPFAM" id="SSF52540">
    <property type="entry name" value="P-loop containing nucleoside triphosphate hydrolases"/>
    <property type="match status" value="1"/>
</dbReference>
<dbReference type="PROSITE" id="PS00690">
    <property type="entry name" value="DEAH_ATP_HELICASE"/>
    <property type="match status" value="1"/>
</dbReference>
<dbReference type="PROSITE" id="PS51192">
    <property type="entry name" value="HELICASE_ATP_BIND_1"/>
    <property type="match status" value="1"/>
</dbReference>
<dbReference type="PROSITE" id="PS51194">
    <property type="entry name" value="HELICASE_CTER"/>
    <property type="match status" value="1"/>
</dbReference>
<keyword id="KW-0067">ATP-binding</keyword>
<keyword id="KW-0963">Cytoplasm</keyword>
<keyword id="KW-0227">DNA damage</keyword>
<keyword id="KW-0233">DNA recombination</keyword>
<keyword id="KW-0234">DNA repair</keyword>
<keyword id="KW-0238">DNA-binding</keyword>
<keyword id="KW-0347">Helicase</keyword>
<keyword id="KW-0378">Hydrolase</keyword>
<keyword id="KW-0413">Isomerase</keyword>
<keyword id="KW-0547">Nucleotide-binding</keyword>
<keyword id="KW-1185">Reference proteome</keyword>
<protein>
    <recommendedName>
        <fullName evidence="7">Probable ATP-dependent DNA helicase RecS</fullName>
        <ecNumber evidence="8">5.6.2.4</ecNumber>
    </recommendedName>
    <alternativeName>
        <fullName evidence="8">Probable DNA 3'-5' helicase RecS</fullName>
    </alternativeName>
    <alternativeName>
        <fullName>Recombination protein S</fullName>
    </alternativeName>
</protein>
<organism>
    <name type="scientific">Bacillus subtilis (strain 168)</name>
    <dbReference type="NCBI Taxonomy" id="224308"/>
    <lineage>
        <taxon>Bacteria</taxon>
        <taxon>Bacillati</taxon>
        <taxon>Bacillota</taxon>
        <taxon>Bacilli</taxon>
        <taxon>Bacillales</taxon>
        <taxon>Bacillaceae</taxon>
        <taxon>Bacillus</taxon>
    </lineage>
</organism>
<gene>
    <name evidence="6" type="primary">recS</name>
    <name evidence="7" type="synonym">ypbC</name>
    <name type="ordered locus">BSU23020</name>
</gene>
<sequence>MTKLQQTLYQFFGFTSFKKGQQDIIESILSGKDTIAMLPTGGGKSLCYQLPGYMLDGMVLIVSPLLSLMEDQVQQLKARGEKRAAALNSMLNRQERQFVLEHIHRYKFLYLSPEALQSPYVLEKLKSVPISLFVIDEAHCISEWGHDFRPDYSKLGQLRKKLGHPPVLALTATATKETLQDVMNLLELQHAVRHLNSVNRPNIALRVENAADTAEKIDRVIQLVENLQGPGIVYCPTRKWAKELAGEIKSKTSSRADFYHGGLESGDRILIQQQFIHNQLDVICCTNAFGMGVDKPDIRYVIHFHLPQTAEAFMQEIGRAGRDGKPSVSILLRAPGDFELQEQIIQMESVTAEEIADVIRVLEKTEERDERRLRDVLLQYGVGETQARMMIHLFMQGKTSVELMKKEISYRMELKLEKMHRVSFLLQRDGCLRQALLTYFDESYEPDDGNLPCCSHCGFDLSLYEQKGERSKMAPLDSWSSELHRIFSLQTVGELN</sequence>